<dbReference type="EMBL" id="AE014291">
    <property type="protein sequence ID" value="AAN31007.1"/>
    <property type="status" value="ALT_INIT"/>
    <property type="molecule type" value="Genomic_DNA"/>
</dbReference>
<dbReference type="EMBL" id="CP002997">
    <property type="protein sequence ID" value="AEM19424.1"/>
    <property type="status" value="ALT_INIT"/>
    <property type="molecule type" value="Genomic_DNA"/>
</dbReference>
<dbReference type="SMR" id="P0A3K9"/>
<dbReference type="KEGG" id="bms:BR2117"/>
<dbReference type="KEGG" id="bsi:BS1330_I2111"/>
<dbReference type="HOGENOM" id="CLU_054919_3_2_5"/>
<dbReference type="Proteomes" id="UP000007104">
    <property type="component" value="Chromosome I"/>
</dbReference>
<dbReference type="GO" id="GO:0005829">
    <property type="term" value="C:cytosol"/>
    <property type="evidence" value="ECO:0007669"/>
    <property type="project" value="TreeGrafter"/>
</dbReference>
<dbReference type="GO" id="GO:0016020">
    <property type="term" value="C:membrane"/>
    <property type="evidence" value="ECO:0007669"/>
    <property type="project" value="TreeGrafter"/>
</dbReference>
<dbReference type="GO" id="GO:0043022">
    <property type="term" value="F:ribosome binding"/>
    <property type="evidence" value="ECO:0007669"/>
    <property type="project" value="TreeGrafter"/>
</dbReference>
<dbReference type="GO" id="GO:0003743">
    <property type="term" value="F:translation initiation factor activity"/>
    <property type="evidence" value="ECO:0007669"/>
    <property type="project" value="UniProtKB-UniRule"/>
</dbReference>
<dbReference type="GO" id="GO:0032790">
    <property type="term" value="P:ribosome disassembly"/>
    <property type="evidence" value="ECO:0007669"/>
    <property type="project" value="TreeGrafter"/>
</dbReference>
<dbReference type="FunFam" id="3.30.110.10:FF:000001">
    <property type="entry name" value="Translation initiation factor IF-3"/>
    <property type="match status" value="1"/>
</dbReference>
<dbReference type="Gene3D" id="3.30.110.10">
    <property type="entry name" value="Translation initiation factor 3 (IF-3), C-terminal domain"/>
    <property type="match status" value="1"/>
</dbReference>
<dbReference type="Gene3D" id="3.10.20.80">
    <property type="entry name" value="Translation initiation factor 3 (IF-3), N-terminal domain"/>
    <property type="match status" value="1"/>
</dbReference>
<dbReference type="HAMAP" id="MF_00080">
    <property type="entry name" value="IF_3"/>
    <property type="match status" value="1"/>
</dbReference>
<dbReference type="InterPro" id="IPR036788">
    <property type="entry name" value="T_IF-3_C_sf"/>
</dbReference>
<dbReference type="InterPro" id="IPR036787">
    <property type="entry name" value="T_IF-3_N_sf"/>
</dbReference>
<dbReference type="InterPro" id="IPR001288">
    <property type="entry name" value="Translation_initiation_fac_3"/>
</dbReference>
<dbReference type="InterPro" id="IPR019815">
    <property type="entry name" value="Translation_initiation_fac_3_C"/>
</dbReference>
<dbReference type="InterPro" id="IPR019814">
    <property type="entry name" value="Translation_initiation_fac_3_N"/>
</dbReference>
<dbReference type="NCBIfam" id="TIGR00168">
    <property type="entry name" value="infC"/>
    <property type="match status" value="1"/>
</dbReference>
<dbReference type="PANTHER" id="PTHR10938">
    <property type="entry name" value="TRANSLATION INITIATION FACTOR IF-3"/>
    <property type="match status" value="1"/>
</dbReference>
<dbReference type="PANTHER" id="PTHR10938:SF0">
    <property type="entry name" value="TRANSLATION INITIATION FACTOR IF-3, MITOCHONDRIAL"/>
    <property type="match status" value="1"/>
</dbReference>
<dbReference type="Pfam" id="PF00707">
    <property type="entry name" value="IF3_C"/>
    <property type="match status" value="1"/>
</dbReference>
<dbReference type="Pfam" id="PF05198">
    <property type="entry name" value="IF3_N"/>
    <property type="match status" value="1"/>
</dbReference>
<dbReference type="SUPFAM" id="SSF55200">
    <property type="entry name" value="Translation initiation factor IF3, C-terminal domain"/>
    <property type="match status" value="1"/>
</dbReference>
<dbReference type="SUPFAM" id="SSF54364">
    <property type="entry name" value="Translation initiation factor IF3, N-terminal domain"/>
    <property type="match status" value="1"/>
</dbReference>
<keyword id="KW-0963">Cytoplasm</keyword>
<keyword id="KW-0396">Initiation factor</keyword>
<keyword id="KW-0648">Protein biosynthesis</keyword>
<reference key="1">
    <citation type="journal article" date="2002" name="Proc. Natl. Acad. Sci. U.S.A.">
        <title>The Brucella suis genome reveals fundamental similarities between animal and plant pathogens and symbionts.</title>
        <authorList>
            <person name="Paulsen I.T."/>
            <person name="Seshadri R."/>
            <person name="Nelson K.E."/>
            <person name="Eisen J.A."/>
            <person name="Heidelberg J.F."/>
            <person name="Read T.D."/>
            <person name="Dodson R.J."/>
            <person name="Umayam L.A."/>
            <person name="Brinkac L.M."/>
            <person name="Beanan M.J."/>
            <person name="Daugherty S.C."/>
            <person name="DeBoy R.T."/>
            <person name="Durkin A.S."/>
            <person name="Kolonay J.F."/>
            <person name="Madupu R."/>
            <person name="Nelson W.C."/>
            <person name="Ayodeji B."/>
            <person name="Kraul M."/>
            <person name="Shetty J."/>
            <person name="Malek J.A."/>
            <person name="Van Aken S.E."/>
            <person name="Riedmuller S."/>
            <person name="Tettelin H."/>
            <person name="Gill S.R."/>
            <person name="White O."/>
            <person name="Salzberg S.L."/>
            <person name="Hoover D.L."/>
            <person name="Lindler L.E."/>
            <person name="Halling S.M."/>
            <person name="Boyle S.M."/>
            <person name="Fraser C.M."/>
        </authorList>
    </citation>
    <scope>NUCLEOTIDE SEQUENCE [LARGE SCALE GENOMIC DNA]</scope>
    <source>
        <strain>1330</strain>
    </source>
</reference>
<reference key="2">
    <citation type="journal article" date="2011" name="J. Bacteriol.">
        <title>Revised genome sequence of Brucella suis 1330.</title>
        <authorList>
            <person name="Tae H."/>
            <person name="Shallom S."/>
            <person name="Settlage R."/>
            <person name="Preston D."/>
            <person name="Adams L.G."/>
            <person name="Garner H.R."/>
        </authorList>
    </citation>
    <scope>NUCLEOTIDE SEQUENCE [LARGE SCALE GENOMIC DNA]</scope>
    <source>
        <strain>1330</strain>
    </source>
</reference>
<comment type="function">
    <text evidence="1">IF-3 binds to the 30S ribosomal subunit and shifts the equilibrium between 70S ribosomes and their 50S and 30S subunits in favor of the free subunits, thus enhancing the availability of 30S subunits on which protein synthesis initiation begins.</text>
</comment>
<comment type="subunit">
    <text evidence="1">Monomer.</text>
</comment>
<comment type="subcellular location">
    <subcellularLocation>
        <location evidence="1">Cytoplasm</location>
    </subcellularLocation>
</comment>
<comment type="similarity">
    <text evidence="1">Belongs to the IF-3 family.</text>
</comment>
<comment type="sequence caution" evidence="3">
    <conflict type="erroneous initiation">
        <sequence resource="EMBL-CDS" id="AAN31007"/>
    </conflict>
    <text>Truncated N-terminus.</text>
</comment>
<comment type="sequence caution" evidence="3">
    <conflict type="erroneous initiation">
        <sequence resource="EMBL-CDS" id="AEM19424"/>
    </conflict>
    <text>Truncated N-terminus.</text>
</comment>
<sequence length="178" mass="20445">MRRPFRATPVQKDGPRSNRDIRVPRVQLIDAEGQNHGDVSIQEAMAMAEEAGLDLVEIVPNAEPPVCKIVDLGKLKYQNQKKAAEARKKQKTVEIKEIKMRPNIDTHDYEVKMKAAQRFFEEGDKVKVTLRFRGREMAHQELGMKLLQRVKEDTVEIAKVESEPKLEGRQMMMVLAPR</sequence>
<protein>
    <recommendedName>
        <fullName evidence="1">Translation initiation factor IF-3</fullName>
    </recommendedName>
</protein>
<name>IF3_BRUSU</name>
<proteinExistence type="inferred from homology"/>
<evidence type="ECO:0000255" key="1">
    <source>
        <dbReference type="HAMAP-Rule" id="MF_00080"/>
    </source>
</evidence>
<evidence type="ECO:0000256" key="2">
    <source>
        <dbReference type="SAM" id="MobiDB-lite"/>
    </source>
</evidence>
<evidence type="ECO:0000305" key="3"/>
<accession>P0A3K9</accession>
<accession>G0K965</accession>
<accession>Q8YE68</accession>
<accession>Q9L8Q0</accession>
<feature type="chain" id="PRO_0000177494" description="Translation initiation factor IF-3">
    <location>
        <begin position="1"/>
        <end position="178"/>
    </location>
</feature>
<feature type="region of interest" description="Disordered" evidence="2">
    <location>
        <begin position="1"/>
        <end position="20"/>
    </location>
</feature>
<organism>
    <name type="scientific">Brucella suis biovar 1 (strain 1330)</name>
    <dbReference type="NCBI Taxonomy" id="204722"/>
    <lineage>
        <taxon>Bacteria</taxon>
        <taxon>Pseudomonadati</taxon>
        <taxon>Pseudomonadota</taxon>
        <taxon>Alphaproteobacteria</taxon>
        <taxon>Hyphomicrobiales</taxon>
        <taxon>Brucellaceae</taxon>
        <taxon>Brucella/Ochrobactrum group</taxon>
        <taxon>Brucella</taxon>
    </lineage>
</organism>
<gene>
    <name evidence="1" type="primary">infC</name>
    <name type="synonym">pifC</name>
    <name type="ordered locus">BR2117</name>
    <name type="ordered locus">BS1330_I2111</name>
</gene>